<organism>
    <name type="scientific">Streptococcus equi subsp. equi (strain 4047)</name>
    <dbReference type="NCBI Taxonomy" id="553482"/>
    <lineage>
        <taxon>Bacteria</taxon>
        <taxon>Bacillati</taxon>
        <taxon>Bacillota</taxon>
        <taxon>Bacilli</taxon>
        <taxon>Lactobacillales</taxon>
        <taxon>Streptococcaceae</taxon>
        <taxon>Streptococcus</taxon>
    </lineage>
</organism>
<accession>C0M935</accession>
<protein>
    <recommendedName>
        <fullName evidence="1">Small ribosomal subunit protein uS7</fullName>
    </recommendedName>
    <alternativeName>
        <fullName evidence="2">30S ribosomal protein S7</fullName>
    </alternativeName>
</protein>
<dbReference type="EMBL" id="FM204883">
    <property type="protein sequence ID" value="CAW92458.1"/>
    <property type="molecule type" value="Genomic_DNA"/>
</dbReference>
<dbReference type="RefSeq" id="WP_012514926.1">
    <property type="nucleotide sequence ID" value="NC_012471.1"/>
</dbReference>
<dbReference type="SMR" id="C0M935"/>
<dbReference type="GeneID" id="83704172"/>
<dbReference type="KEGG" id="seu:SEQ_0341"/>
<dbReference type="HOGENOM" id="CLU_072226_1_1_9"/>
<dbReference type="OrthoDB" id="9807653at2"/>
<dbReference type="Proteomes" id="UP000001365">
    <property type="component" value="Chromosome"/>
</dbReference>
<dbReference type="GO" id="GO:0015935">
    <property type="term" value="C:small ribosomal subunit"/>
    <property type="evidence" value="ECO:0007669"/>
    <property type="project" value="InterPro"/>
</dbReference>
<dbReference type="GO" id="GO:0019843">
    <property type="term" value="F:rRNA binding"/>
    <property type="evidence" value="ECO:0007669"/>
    <property type="project" value="UniProtKB-UniRule"/>
</dbReference>
<dbReference type="GO" id="GO:0003735">
    <property type="term" value="F:structural constituent of ribosome"/>
    <property type="evidence" value="ECO:0007669"/>
    <property type="project" value="InterPro"/>
</dbReference>
<dbReference type="GO" id="GO:0000049">
    <property type="term" value="F:tRNA binding"/>
    <property type="evidence" value="ECO:0007669"/>
    <property type="project" value="UniProtKB-UniRule"/>
</dbReference>
<dbReference type="GO" id="GO:0006412">
    <property type="term" value="P:translation"/>
    <property type="evidence" value="ECO:0007669"/>
    <property type="project" value="UniProtKB-UniRule"/>
</dbReference>
<dbReference type="CDD" id="cd14869">
    <property type="entry name" value="uS7_Bacteria"/>
    <property type="match status" value="1"/>
</dbReference>
<dbReference type="FunFam" id="1.10.455.10:FF:000001">
    <property type="entry name" value="30S ribosomal protein S7"/>
    <property type="match status" value="1"/>
</dbReference>
<dbReference type="Gene3D" id="1.10.455.10">
    <property type="entry name" value="Ribosomal protein S7 domain"/>
    <property type="match status" value="1"/>
</dbReference>
<dbReference type="HAMAP" id="MF_00480_B">
    <property type="entry name" value="Ribosomal_uS7_B"/>
    <property type="match status" value="1"/>
</dbReference>
<dbReference type="InterPro" id="IPR000235">
    <property type="entry name" value="Ribosomal_uS7"/>
</dbReference>
<dbReference type="InterPro" id="IPR005717">
    <property type="entry name" value="Ribosomal_uS7_bac/org-type"/>
</dbReference>
<dbReference type="InterPro" id="IPR020606">
    <property type="entry name" value="Ribosomal_uS7_CS"/>
</dbReference>
<dbReference type="InterPro" id="IPR023798">
    <property type="entry name" value="Ribosomal_uS7_dom"/>
</dbReference>
<dbReference type="InterPro" id="IPR036823">
    <property type="entry name" value="Ribosomal_uS7_dom_sf"/>
</dbReference>
<dbReference type="NCBIfam" id="TIGR01029">
    <property type="entry name" value="rpsG_bact"/>
    <property type="match status" value="1"/>
</dbReference>
<dbReference type="PANTHER" id="PTHR11205">
    <property type="entry name" value="RIBOSOMAL PROTEIN S7"/>
    <property type="match status" value="1"/>
</dbReference>
<dbReference type="Pfam" id="PF00177">
    <property type="entry name" value="Ribosomal_S7"/>
    <property type="match status" value="1"/>
</dbReference>
<dbReference type="PIRSF" id="PIRSF002122">
    <property type="entry name" value="RPS7p_RPS7a_RPS5e_RPS7o"/>
    <property type="match status" value="1"/>
</dbReference>
<dbReference type="SUPFAM" id="SSF47973">
    <property type="entry name" value="Ribosomal protein S7"/>
    <property type="match status" value="1"/>
</dbReference>
<dbReference type="PROSITE" id="PS00052">
    <property type="entry name" value="RIBOSOMAL_S7"/>
    <property type="match status" value="1"/>
</dbReference>
<keyword id="KW-0687">Ribonucleoprotein</keyword>
<keyword id="KW-0689">Ribosomal protein</keyword>
<keyword id="KW-0694">RNA-binding</keyword>
<keyword id="KW-0699">rRNA-binding</keyword>
<keyword id="KW-0820">tRNA-binding</keyword>
<gene>
    <name evidence="1" type="primary">rpsG</name>
    <name type="ordered locus">SEQ_0341</name>
</gene>
<proteinExistence type="inferred from homology"/>
<reference key="1">
    <citation type="journal article" date="2009" name="PLoS Pathog.">
        <title>Genomic evidence for the evolution of Streptococcus equi: host restriction, increased virulence, and genetic exchange with human pathogens.</title>
        <authorList>
            <person name="Holden M.T.G."/>
            <person name="Heather Z."/>
            <person name="Paillot R."/>
            <person name="Steward K.F."/>
            <person name="Webb K."/>
            <person name="Ainslie F."/>
            <person name="Jourdan T."/>
            <person name="Bason N.C."/>
            <person name="Holroyd N.E."/>
            <person name="Mungall K."/>
            <person name="Quail M.A."/>
            <person name="Sanders M."/>
            <person name="Simmonds M."/>
            <person name="Willey D."/>
            <person name="Brooks K."/>
            <person name="Aanensen D.M."/>
            <person name="Spratt B.G."/>
            <person name="Jolley K.A."/>
            <person name="Maiden M.C.J."/>
            <person name="Kehoe M."/>
            <person name="Chanter N."/>
            <person name="Bentley S.D."/>
            <person name="Robinson C."/>
            <person name="Maskell D.J."/>
            <person name="Parkhill J."/>
            <person name="Waller A.S."/>
        </authorList>
    </citation>
    <scope>NUCLEOTIDE SEQUENCE [LARGE SCALE GENOMIC DNA]</scope>
    <source>
        <strain>4047</strain>
    </source>
</reference>
<name>RS7_STRE4</name>
<sequence length="156" mass="17741">MSRKNRAPKREVLPDPLYNSKLVTRLINRIMLDGKRGTASSIVYDAFSEIKEATGNDALEVFETAMDNIMPVLEVRARRVGGSNYQVPVEVRPERRTTLGLRWLVTASRARGEHTMKDRLAKEIMDAANNTGASVKKREDTHKMAEANRAFAHFRW</sequence>
<feature type="chain" id="PRO_1000135624" description="Small ribosomal subunit protein uS7">
    <location>
        <begin position="1"/>
        <end position="156"/>
    </location>
</feature>
<comment type="function">
    <text evidence="1">One of the primary rRNA binding proteins, it binds directly to 16S rRNA where it nucleates assembly of the head domain of the 30S subunit. Is located at the subunit interface close to the decoding center, probably blocks exit of the E-site tRNA.</text>
</comment>
<comment type="subunit">
    <text evidence="1">Part of the 30S ribosomal subunit. Contacts proteins S9 and S11.</text>
</comment>
<comment type="similarity">
    <text evidence="1">Belongs to the universal ribosomal protein uS7 family.</text>
</comment>
<evidence type="ECO:0000255" key="1">
    <source>
        <dbReference type="HAMAP-Rule" id="MF_00480"/>
    </source>
</evidence>
<evidence type="ECO:0000305" key="2"/>